<accession>A7X4I7</accession>
<proteinExistence type="inferred from homology"/>
<sequence>MKARLLLLSVVILVGMVSAENEKAGSCPDVNQPIPPLGLCRNMCESDSGCPNNEKCCKNGCGFMTCSRPR</sequence>
<name>WAP1_THRJA</name>
<comment type="function">
    <text evidence="1">Damages membranes of susceptible bacteria. Has no hemolytic activity. Not toxic to mice. Does not inhibit the proteinases elastase and cathepsin G.</text>
</comment>
<comment type="subcellular location">
    <subcellularLocation>
        <location evidence="6">Secreted</location>
    </subcellularLocation>
</comment>
<comment type="tissue specificity">
    <text evidence="6">Expressed by the venom gland.</text>
</comment>
<comment type="similarity">
    <text evidence="5">Belongs to the venom waprin family.</text>
</comment>
<protein>
    <recommendedName>
        <fullName evidence="4">Waprin-Thr1</fullName>
    </recommendedName>
</protein>
<evidence type="ECO:0000250" key="1">
    <source>
        <dbReference type="UniProtKB" id="P83952"/>
    </source>
</evidence>
<evidence type="ECO:0000255" key="2"/>
<evidence type="ECO:0000255" key="3">
    <source>
        <dbReference type="PROSITE-ProRule" id="PRU00722"/>
    </source>
</evidence>
<evidence type="ECO:0000303" key="4">
    <source>
    </source>
</evidence>
<evidence type="ECO:0000305" key="5"/>
<evidence type="ECO:0000305" key="6">
    <source>
    </source>
</evidence>
<dbReference type="EMBL" id="EU029740">
    <property type="protein sequence ID" value="ABU68540.1"/>
    <property type="molecule type" value="mRNA"/>
</dbReference>
<dbReference type="SMR" id="A7X4I7"/>
<dbReference type="GO" id="GO:0005576">
    <property type="term" value="C:extracellular region"/>
    <property type="evidence" value="ECO:0000250"/>
    <property type="project" value="UniProtKB"/>
</dbReference>
<dbReference type="GO" id="GO:0030414">
    <property type="term" value="F:peptidase inhibitor activity"/>
    <property type="evidence" value="ECO:0007669"/>
    <property type="project" value="InterPro"/>
</dbReference>
<dbReference type="GO" id="GO:0042742">
    <property type="term" value="P:defense response to bacterium"/>
    <property type="evidence" value="ECO:0007669"/>
    <property type="project" value="UniProtKB-KW"/>
</dbReference>
<dbReference type="GO" id="GO:0044278">
    <property type="term" value="P:venom-mediated disruption of cell wall in another organism"/>
    <property type="evidence" value="ECO:0000250"/>
    <property type="project" value="UniProtKB"/>
</dbReference>
<dbReference type="FunFam" id="4.10.75.10:FF:000001">
    <property type="entry name" value="Anosmin 1"/>
    <property type="match status" value="1"/>
</dbReference>
<dbReference type="Gene3D" id="4.10.75.10">
    <property type="entry name" value="Elafin-like"/>
    <property type="match status" value="1"/>
</dbReference>
<dbReference type="InterPro" id="IPR036645">
    <property type="entry name" value="Elafin-like_sf"/>
</dbReference>
<dbReference type="InterPro" id="IPR008197">
    <property type="entry name" value="WAP_dom"/>
</dbReference>
<dbReference type="Pfam" id="PF00095">
    <property type="entry name" value="WAP"/>
    <property type="match status" value="1"/>
</dbReference>
<dbReference type="SMART" id="SM00217">
    <property type="entry name" value="WAP"/>
    <property type="match status" value="1"/>
</dbReference>
<dbReference type="SUPFAM" id="SSF57256">
    <property type="entry name" value="Elafin-like"/>
    <property type="match status" value="1"/>
</dbReference>
<dbReference type="PROSITE" id="PS51390">
    <property type="entry name" value="WAP"/>
    <property type="match status" value="1"/>
</dbReference>
<reference key="1">
    <citation type="journal article" date="2008" name="Mol. Cell. Proteomics">
        <title>Evolution of an arsenal: structural and functional diversification of the venom system in the advanced snakes (Caenophidia).</title>
        <authorList>
            <person name="Fry B.G."/>
            <person name="Scheib H."/>
            <person name="van der Weerd L."/>
            <person name="Young B."/>
            <person name="McNaughtan J."/>
            <person name="Ramjan S.F.R."/>
            <person name="Vidal N."/>
            <person name="Poelmann R.E."/>
            <person name="Norman J.A."/>
        </authorList>
    </citation>
    <scope>NUCLEOTIDE SEQUENCE [MRNA]</scope>
    <source>
        <tissue>Venom gland</tissue>
    </source>
</reference>
<feature type="signal peptide" evidence="2">
    <location>
        <begin position="1"/>
        <end position="19"/>
    </location>
</feature>
<feature type="chain" id="PRO_0000314691" description="Waprin-Thr1">
    <location>
        <begin position="20"/>
        <end position="70"/>
    </location>
</feature>
<feature type="domain" description="WAP" evidence="3">
    <location>
        <begin position="20"/>
        <end position="70"/>
    </location>
</feature>
<feature type="disulfide bond" evidence="3">
    <location>
        <begin position="27"/>
        <end position="57"/>
    </location>
</feature>
<feature type="disulfide bond" evidence="3">
    <location>
        <begin position="40"/>
        <end position="61"/>
    </location>
</feature>
<feature type="disulfide bond" evidence="3">
    <location>
        <begin position="44"/>
        <end position="56"/>
    </location>
</feature>
<feature type="disulfide bond" evidence="3">
    <location>
        <begin position="50"/>
        <end position="66"/>
    </location>
</feature>
<organism>
    <name type="scientific">Thrasops jacksonii</name>
    <name type="common">Jackson's black tree snake</name>
    <dbReference type="NCBI Taxonomy" id="186611"/>
    <lineage>
        <taxon>Eukaryota</taxon>
        <taxon>Metazoa</taxon>
        <taxon>Chordata</taxon>
        <taxon>Craniata</taxon>
        <taxon>Vertebrata</taxon>
        <taxon>Euteleostomi</taxon>
        <taxon>Lepidosauria</taxon>
        <taxon>Squamata</taxon>
        <taxon>Bifurcata</taxon>
        <taxon>Unidentata</taxon>
        <taxon>Episquamata</taxon>
        <taxon>Toxicofera</taxon>
        <taxon>Serpentes</taxon>
        <taxon>Colubroidea</taxon>
        <taxon>Colubridae</taxon>
        <taxon>Colubrinae</taxon>
        <taxon>Thrasops</taxon>
    </lineage>
</organism>
<keyword id="KW-0044">Antibiotic</keyword>
<keyword id="KW-0929">Antimicrobial</keyword>
<keyword id="KW-1015">Disulfide bond</keyword>
<keyword id="KW-0964">Secreted</keyword>
<keyword id="KW-0732">Signal</keyword>